<evidence type="ECO:0000255" key="1">
    <source>
        <dbReference type="HAMAP-Rule" id="MF_01080"/>
    </source>
</evidence>
<proteinExistence type="inferred from homology"/>
<reference key="1">
    <citation type="submission" date="2007-09" db="EMBL/GenBank/DDBJ databases">
        <title>Complete genome sequence of Rickettsia akari.</title>
        <authorList>
            <person name="Madan A."/>
            <person name="Fahey J."/>
            <person name="Helton E."/>
            <person name="Ketteman M."/>
            <person name="Madan A."/>
            <person name="Rodrigues S."/>
            <person name="Sanchez A."/>
            <person name="Whiting M."/>
            <person name="Dasch G."/>
            <person name="Eremeeva M."/>
        </authorList>
    </citation>
    <scope>NUCLEOTIDE SEQUENCE [LARGE SCALE GENOMIC DNA]</scope>
    <source>
        <strain>Hartford</strain>
    </source>
</reference>
<name>TRUB_RICAH</name>
<organism>
    <name type="scientific">Rickettsia akari (strain Hartford)</name>
    <dbReference type="NCBI Taxonomy" id="293614"/>
    <lineage>
        <taxon>Bacteria</taxon>
        <taxon>Pseudomonadati</taxon>
        <taxon>Pseudomonadota</taxon>
        <taxon>Alphaproteobacteria</taxon>
        <taxon>Rickettsiales</taxon>
        <taxon>Rickettsiaceae</taxon>
        <taxon>Rickettsieae</taxon>
        <taxon>Rickettsia</taxon>
        <taxon>spotted fever group</taxon>
    </lineage>
</organism>
<feature type="chain" id="PRO_1000084659" description="tRNA pseudouridine synthase B">
    <location>
        <begin position="1"/>
        <end position="293"/>
    </location>
</feature>
<feature type="active site" description="Nucleophile" evidence="1">
    <location>
        <position position="40"/>
    </location>
</feature>
<keyword id="KW-0413">Isomerase</keyword>
<keyword id="KW-0819">tRNA processing</keyword>
<gene>
    <name evidence="1" type="primary">truB</name>
    <name type="ordered locus">A1C_03570</name>
</gene>
<dbReference type="EC" id="5.4.99.25" evidence="1"/>
<dbReference type="EMBL" id="CP000847">
    <property type="protein sequence ID" value="ABV74995.1"/>
    <property type="molecule type" value="Genomic_DNA"/>
</dbReference>
<dbReference type="RefSeq" id="WP_012149627.1">
    <property type="nucleotide sequence ID" value="NC_009881.1"/>
</dbReference>
<dbReference type="SMR" id="A8GNM0"/>
<dbReference type="STRING" id="293614.A1C_03570"/>
<dbReference type="KEGG" id="rak:A1C_03570"/>
<dbReference type="eggNOG" id="COG0130">
    <property type="taxonomic scope" value="Bacteria"/>
</dbReference>
<dbReference type="HOGENOM" id="CLU_032087_0_3_5"/>
<dbReference type="Proteomes" id="UP000006830">
    <property type="component" value="Chromosome"/>
</dbReference>
<dbReference type="GO" id="GO:0003723">
    <property type="term" value="F:RNA binding"/>
    <property type="evidence" value="ECO:0007669"/>
    <property type="project" value="InterPro"/>
</dbReference>
<dbReference type="GO" id="GO:0160148">
    <property type="term" value="F:tRNA pseudouridine(55) synthase activity"/>
    <property type="evidence" value="ECO:0007669"/>
    <property type="project" value="UniProtKB-EC"/>
</dbReference>
<dbReference type="GO" id="GO:1990481">
    <property type="term" value="P:mRNA pseudouridine synthesis"/>
    <property type="evidence" value="ECO:0007669"/>
    <property type="project" value="TreeGrafter"/>
</dbReference>
<dbReference type="GO" id="GO:0031119">
    <property type="term" value="P:tRNA pseudouridine synthesis"/>
    <property type="evidence" value="ECO:0007669"/>
    <property type="project" value="UniProtKB-UniRule"/>
</dbReference>
<dbReference type="CDD" id="cd02573">
    <property type="entry name" value="PseudoU_synth_EcTruB"/>
    <property type="match status" value="1"/>
</dbReference>
<dbReference type="Gene3D" id="3.30.2350.10">
    <property type="entry name" value="Pseudouridine synthase"/>
    <property type="match status" value="1"/>
</dbReference>
<dbReference type="HAMAP" id="MF_01080">
    <property type="entry name" value="TruB_bact"/>
    <property type="match status" value="1"/>
</dbReference>
<dbReference type="InterPro" id="IPR020103">
    <property type="entry name" value="PsdUridine_synth_cat_dom_sf"/>
</dbReference>
<dbReference type="InterPro" id="IPR002501">
    <property type="entry name" value="PsdUridine_synth_N"/>
</dbReference>
<dbReference type="InterPro" id="IPR014780">
    <property type="entry name" value="tRNA_psdUridine_synth_TruB"/>
</dbReference>
<dbReference type="InterPro" id="IPR032819">
    <property type="entry name" value="TruB_C"/>
</dbReference>
<dbReference type="NCBIfam" id="TIGR00431">
    <property type="entry name" value="TruB"/>
    <property type="match status" value="1"/>
</dbReference>
<dbReference type="PANTHER" id="PTHR13767:SF2">
    <property type="entry name" value="PSEUDOURIDYLATE SYNTHASE TRUB1"/>
    <property type="match status" value="1"/>
</dbReference>
<dbReference type="PANTHER" id="PTHR13767">
    <property type="entry name" value="TRNA-PSEUDOURIDINE SYNTHASE"/>
    <property type="match status" value="1"/>
</dbReference>
<dbReference type="Pfam" id="PF16198">
    <property type="entry name" value="TruB_C_2"/>
    <property type="match status" value="1"/>
</dbReference>
<dbReference type="Pfam" id="PF01509">
    <property type="entry name" value="TruB_N"/>
    <property type="match status" value="1"/>
</dbReference>
<dbReference type="SUPFAM" id="SSF55120">
    <property type="entry name" value="Pseudouridine synthase"/>
    <property type="match status" value="1"/>
</dbReference>
<sequence length="293" mass="32752">MSNYWLNIYKPGGISSAKLVSMVKQILGKKVKVGHAGTLDVEAEGILPIAVGEATKLIQLLIDSRKTYIFTIKFGLQTDSGDYTGTVIATKNYIPSQEEAYTVCSKFIGKVTQIPPAFSALKVNGVRAYKFAREGKEVELKPRNITIYNLKCLNFDKKNAIAIYYTECSKGTYIRTLAEDLALSLQSLGFVIELRRTQVGIFKAENAIRIKSPDEITKSFLEEKSIKIEAILDDILVLDATDSQAQQIKYGQKCIFDYEDDISLLWVRYKGTLLAIGSLNKNCFNSLRVFNVL</sequence>
<accession>A8GNM0</accession>
<comment type="function">
    <text evidence="1">Responsible for synthesis of pseudouridine from uracil-55 in the psi GC loop of transfer RNAs.</text>
</comment>
<comment type="catalytic activity">
    <reaction evidence="1">
        <text>uridine(55) in tRNA = pseudouridine(55) in tRNA</text>
        <dbReference type="Rhea" id="RHEA:42532"/>
        <dbReference type="Rhea" id="RHEA-COMP:10101"/>
        <dbReference type="Rhea" id="RHEA-COMP:10102"/>
        <dbReference type="ChEBI" id="CHEBI:65314"/>
        <dbReference type="ChEBI" id="CHEBI:65315"/>
        <dbReference type="EC" id="5.4.99.25"/>
    </reaction>
</comment>
<comment type="similarity">
    <text evidence="1">Belongs to the pseudouridine synthase TruB family. Type 1 subfamily.</text>
</comment>
<protein>
    <recommendedName>
        <fullName evidence="1">tRNA pseudouridine synthase B</fullName>
        <ecNumber evidence="1">5.4.99.25</ecNumber>
    </recommendedName>
    <alternativeName>
        <fullName evidence="1">tRNA pseudouridine(55) synthase</fullName>
        <shortName evidence="1">Psi55 synthase</shortName>
    </alternativeName>
    <alternativeName>
        <fullName evidence="1">tRNA pseudouridylate synthase</fullName>
    </alternativeName>
    <alternativeName>
        <fullName evidence="1">tRNA-uridine isomerase</fullName>
    </alternativeName>
</protein>